<name>MINC_RALPJ</name>
<proteinExistence type="inferred from homology"/>
<protein>
    <recommendedName>
        <fullName evidence="1">Probable septum site-determining protein MinC</fullName>
    </recommendedName>
</protein>
<dbReference type="EMBL" id="CP001068">
    <property type="protein sequence ID" value="ACD28680.1"/>
    <property type="molecule type" value="Genomic_DNA"/>
</dbReference>
<dbReference type="SMR" id="B2UGZ7"/>
<dbReference type="STRING" id="402626.Rpic_3561"/>
<dbReference type="KEGG" id="rpi:Rpic_3561"/>
<dbReference type="PATRIC" id="fig|402626.5.peg.4699"/>
<dbReference type="eggNOG" id="COG0850">
    <property type="taxonomic scope" value="Bacteria"/>
</dbReference>
<dbReference type="HOGENOM" id="CLU_067812_0_0_4"/>
<dbReference type="GO" id="GO:0000902">
    <property type="term" value="P:cell morphogenesis"/>
    <property type="evidence" value="ECO:0007669"/>
    <property type="project" value="InterPro"/>
</dbReference>
<dbReference type="GO" id="GO:0000917">
    <property type="term" value="P:division septum assembly"/>
    <property type="evidence" value="ECO:0007669"/>
    <property type="project" value="UniProtKB-KW"/>
</dbReference>
<dbReference type="GO" id="GO:0051302">
    <property type="term" value="P:regulation of cell division"/>
    <property type="evidence" value="ECO:0007669"/>
    <property type="project" value="InterPro"/>
</dbReference>
<dbReference type="GO" id="GO:1901891">
    <property type="term" value="P:regulation of cell septum assembly"/>
    <property type="evidence" value="ECO:0007669"/>
    <property type="project" value="InterPro"/>
</dbReference>
<dbReference type="Gene3D" id="2.160.20.70">
    <property type="match status" value="1"/>
</dbReference>
<dbReference type="Gene3D" id="3.30.70.260">
    <property type="match status" value="1"/>
</dbReference>
<dbReference type="HAMAP" id="MF_00267">
    <property type="entry name" value="MinC"/>
    <property type="match status" value="1"/>
</dbReference>
<dbReference type="InterPro" id="IPR016098">
    <property type="entry name" value="CAP/MinC_C"/>
</dbReference>
<dbReference type="InterPro" id="IPR013033">
    <property type="entry name" value="MinC"/>
</dbReference>
<dbReference type="InterPro" id="IPR036145">
    <property type="entry name" value="MinC_C_sf"/>
</dbReference>
<dbReference type="InterPro" id="IPR007874">
    <property type="entry name" value="MinC_N"/>
</dbReference>
<dbReference type="InterPro" id="IPR005526">
    <property type="entry name" value="Septum_form_inhib_MinC_C"/>
</dbReference>
<dbReference type="NCBIfam" id="TIGR01222">
    <property type="entry name" value="minC"/>
    <property type="match status" value="1"/>
</dbReference>
<dbReference type="PANTHER" id="PTHR34108">
    <property type="entry name" value="SEPTUM SITE-DETERMINING PROTEIN MINC"/>
    <property type="match status" value="1"/>
</dbReference>
<dbReference type="PANTHER" id="PTHR34108:SF1">
    <property type="entry name" value="SEPTUM SITE-DETERMINING PROTEIN MINC"/>
    <property type="match status" value="1"/>
</dbReference>
<dbReference type="Pfam" id="PF03775">
    <property type="entry name" value="MinC_C"/>
    <property type="match status" value="1"/>
</dbReference>
<dbReference type="Pfam" id="PF05209">
    <property type="entry name" value="MinC_N"/>
    <property type="match status" value="1"/>
</dbReference>
<dbReference type="SUPFAM" id="SSF63848">
    <property type="entry name" value="Cell-division inhibitor MinC, C-terminal domain"/>
    <property type="match status" value="1"/>
</dbReference>
<evidence type="ECO:0000255" key="1">
    <source>
        <dbReference type="HAMAP-Rule" id="MF_00267"/>
    </source>
</evidence>
<evidence type="ECO:0000256" key="2">
    <source>
        <dbReference type="SAM" id="MobiDB-lite"/>
    </source>
</evidence>
<comment type="function">
    <text evidence="1">Cell division inhibitor that blocks the formation of polar Z ring septums. Rapidly oscillates between the poles of the cell to destabilize FtsZ filaments that have formed before they mature into polar Z rings. Prevents FtsZ polymerization.</text>
</comment>
<comment type="subunit">
    <text evidence="1">Interacts with MinD and FtsZ.</text>
</comment>
<comment type="similarity">
    <text evidence="1">Belongs to the MinC family.</text>
</comment>
<sequence>MSQKKAPLFEIRSGTVDALLLSPRTADMDALAAELTRRFADTPEFFSNDVIAIDVRRLAEDERLPIDRLVETLTALRARAIGVVASPEQAGWAQAFGLPLLDSHGRRPRGGNDAKDADRNDAQDAQGAPEHAQAAEAPASTSAIPPADAAAMQPGTMIVDRPLRSGQRIYARGDLVVLDLVSDGAEVIAEGNIYVYASLRGRALAGVKGNLDARIFCTCLEPQLISIAGIYRTGETPWPDAYASKPAQVRLADNTLVFEPLRMK</sequence>
<gene>
    <name evidence="1" type="primary">minC</name>
    <name type="ordered locus">Rpic_3561</name>
</gene>
<accession>B2UGZ7</accession>
<reference key="1">
    <citation type="submission" date="2008-05" db="EMBL/GenBank/DDBJ databases">
        <title>Complete sequence of chromosome 1 of Ralstonia pickettii 12J.</title>
        <authorList>
            <person name="Lucas S."/>
            <person name="Copeland A."/>
            <person name="Lapidus A."/>
            <person name="Glavina del Rio T."/>
            <person name="Dalin E."/>
            <person name="Tice H."/>
            <person name="Bruce D."/>
            <person name="Goodwin L."/>
            <person name="Pitluck S."/>
            <person name="Meincke L."/>
            <person name="Brettin T."/>
            <person name="Detter J.C."/>
            <person name="Han C."/>
            <person name="Kuske C.R."/>
            <person name="Schmutz J."/>
            <person name="Larimer F."/>
            <person name="Land M."/>
            <person name="Hauser L."/>
            <person name="Kyrpides N."/>
            <person name="Mikhailova N."/>
            <person name="Marsh T."/>
            <person name="Richardson P."/>
        </authorList>
    </citation>
    <scope>NUCLEOTIDE SEQUENCE [LARGE SCALE GENOMIC DNA]</scope>
    <source>
        <strain>12J</strain>
    </source>
</reference>
<keyword id="KW-0131">Cell cycle</keyword>
<keyword id="KW-0132">Cell division</keyword>
<keyword id="KW-0717">Septation</keyword>
<feature type="chain" id="PRO_1000114286" description="Probable septum site-determining protein MinC">
    <location>
        <begin position="1"/>
        <end position="264"/>
    </location>
</feature>
<feature type="region of interest" description="Disordered" evidence="2">
    <location>
        <begin position="103"/>
        <end position="147"/>
    </location>
</feature>
<feature type="compositionally biased region" description="Basic and acidic residues" evidence="2">
    <location>
        <begin position="110"/>
        <end position="122"/>
    </location>
</feature>
<feature type="compositionally biased region" description="Low complexity" evidence="2">
    <location>
        <begin position="124"/>
        <end position="147"/>
    </location>
</feature>
<organism>
    <name type="scientific">Ralstonia pickettii (strain 12J)</name>
    <dbReference type="NCBI Taxonomy" id="402626"/>
    <lineage>
        <taxon>Bacteria</taxon>
        <taxon>Pseudomonadati</taxon>
        <taxon>Pseudomonadota</taxon>
        <taxon>Betaproteobacteria</taxon>
        <taxon>Burkholderiales</taxon>
        <taxon>Burkholderiaceae</taxon>
        <taxon>Ralstonia</taxon>
    </lineage>
</organism>